<feature type="transit peptide" description="Mitochondrion" evidence="3">
    <location>
        <begin position="1"/>
        <end status="unknown"/>
    </location>
</feature>
<feature type="chain" id="PRO_0000002090" description="Agmatinase, mitochondrial">
    <location>
        <begin status="unknown"/>
        <end position="340"/>
    </location>
</feature>
<feature type="binding site" evidence="4">
    <location>
        <position position="150"/>
    </location>
    <ligand>
        <name>Mn(2+)</name>
        <dbReference type="ChEBI" id="CHEBI:29035"/>
        <label>1</label>
    </ligand>
</feature>
<feature type="binding site" evidence="4">
    <location>
        <position position="173"/>
    </location>
    <ligand>
        <name>Mn(2+)</name>
        <dbReference type="ChEBI" id="CHEBI:29035"/>
        <label>1</label>
    </ligand>
</feature>
<feature type="binding site" evidence="4">
    <location>
        <position position="173"/>
    </location>
    <ligand>
        <name>Mn(2+)</name>
        <dbReference type="ChEBI" id="CHEBI:29035"/>
        <label>2</label>
    </ligand>
</feature>
<feature type="binding site" evidence="4">
    <location>
        <position position="175"/>
    </location>
    <ligand>
        <name>Mn(2+)</name>
        <dbReference type="ChEBI" id="CHEBI:29035"/>
        <label>2</label>
    </ligand>
</feature>
<feature type="binding site" evidence="4">
    <location>
        <position position="177"/>
    </location>
    <ligand>
        <name>Mn(2+)</name>
        <dbReference type="ChEBI" id="CHEBI:29035"/>
        <label>1</label>
    </ligand>
</feature>
<feature type="binding site" evidence="4">
    <location>
        <position position="264"/>
    </location>
    <ligand>
        <name>Mn(2+)</name>
        <dbReference type="ChEBI" id="CHEBI:29035"/>
        <label>1</label>
    </ligand>
</feature>
<feature type="binding site" evidence="4">
    <location>
        <position position="264"/>
    </location>
    <ligand>
        <name>Mn(2+)</name>
        <dbReference type="ChEBI" id="CHEBI:29035"/>
        <label>2</label>
    </ligand>
</feature>
<feature type="binding site" evidence="4">
    <location>
        <position position="266"/>
    </location>
    <ligand>
        <name>Mn(2+)</name>
        <dbReference type="ChEBI" id="CHEBI:29035"/>
        <label>2</label>
    </ligand>
</feature>
<comment type="catalytic activity">
    <reaction evidence="2">
        <text>agmatine + H2O = urea + putrescine</text>
        <dbReference type="Rhea" id="RHEA:13929"/>
        <dbReference type="ChEBI" id="CHEBI:15377"/>
        <dbReference type="ChEBI" id="CHEBI:16199"/>
        <dbReference type="ChEBI" id="CHEBI:58145"/>
        <dbReference type="ChEBI" id="CHEBI:326268"/>
        <dbReference type="EC" id="3.5.3.11"/>
    </reaction>
</comment>
<comment type="cofactor">
    <cofactor evidence="4">
        <name>Mn(2+)</name>
        <dbReference type="ChEBI" id="CHEBI:29035"/>
    </cofactor>
</comment>
<comment type="pathway">
    <text evidence="2">Amine and polyamine biosynthesis; putrescine biosynthesis via agmatine pathway; putrescine from agmatine: step 1/1.</text>
</comment>
<comment type="subcellular location">
    <subcellularLocation>
        <location evidence="1">Mitochondrion</location>
    </subcellularLocation>
</comment>
<comment type="similarity">
    <text evidence="4">Belongs to the arginase family. Agmatinase subfamily.</text>
</comment>
<gene>
    <name type="primary">AGMAT</name>
</gene>
<organism>
    <name type="scientific">Gallus gallus</name>
    <name type="common">Chicken</name>
    <dbReference type="NCBI Taxonomy" id="9031"/>
    <lineage>
        <taxon>Eukaryota</taxon>
        <taxon>Metazoa</taxon>
        <taxon>Chordata</taxon>
        <taxon>Craniata</taxon>
        <taxon>Vertebrata</taxon>
        <taxon>Euteleostomi</taxon>
        <taxon>Archelosauria</taxon>
        <taxon>Archosauria</taxon>
        <taxon>Dinosauria</taxon>
        <taxon>Saurischia</taxon>
        <taxon>Theropoda</taxon>
        <taxon>Coelurosauria</taxon>
        <taxon>Aves</taxon>
        <taxon>Neognathae</taxon>
        <taxon>Galloanserae</taxon>
        <taxon>Galliformes</taxon>
        <taxon>Phasianidae</taxon>
        <taxon>Phasianinae</taxon>
        <taxon>Gallus</taxon>
    </lineage>
</organism>
<keyword id="KW-0378">Hydrolase</keyword>
<keyword id="KW-0464">Manganese</keyword>
<keyword id="KW-0479">Metal-binding</keyword>
<keyword id="KW-0496">Mitochondrion</keyword>
<keyword id="KW-0661">Putrescine biosynthesis</keyword>
<keyword id="KW-1185">Reference proteome</keyword>
<keyword id="KW-0745">Spermidine biosynthesis</keyword>
<keyword id="KW-0809">Transit peptide</keyword>
<sequence>MICLLRTARLSARLLFASAAAPCRRASRFNVPPSAEFVARPVGVCSMLRLPVQTSAEGLDAAFVGVPLDTGTSNRPGARFGPQQIRAESVMVRRYNASTGAAPFDSLLVADVGDVNVNLYNLPDSCRRIRESYQKIVASGCVPLTLGGDHSITYPILQAVAEKHGPVGLVHVDAHTDTSDMALGEKIYHGTPFRRCVDEGLLDCSRVVQIGIRGSSYAPNPYKYCWDQGFRVVPAEECWMKSLVPLMGEVRQQMGDGPVYISFDIDGLDPAYAPGTGTPEIAGLTPMQALEIIRGCKGLNIVGCDLVEVAPIYDVSGNTALLGANLLFEMLCVLPGVKTM</sequence>
<evidence type="ECO:0000250" key="1"/>
<evidence type="ECO:0000250" key="2">
    <source>
        <dbReference type="UniProtKB" id="Q9BSE5"/>
    </source>
</evidence>
<evidence type="ECO:0000255" key="3"/>
<evidence type="ECO:0000255" key="4">
    <source>
        <dbReference type="PROSITE-ProRule" id="PRU00742"/>
    </source>
</evidence>
<name>SPEB_CHICK</name>
<dbReference type="EC" id="3.5.3.11" evidence="2"/>
<dbReference type="EMBL" id="AF401291">
    <property type="protein sequence ID" value="AAK97629.1"/>
    <property type="molecule type" value="mRNA"/>
</dbReference>
<dbReference type="RefSeq" id="NP_989474.1">
    <property type="nucleotide sequence ID" value="NM_204143.2"/>
</dbReference>
<dbReference type="SMR" id="Q90XD2"/>
<dbReference type="FunCoup" id="Q90XD2">
    <property type="interactions" value="34"/>
</dbReference>
<dbReference type="STRING" id="9031.ENSGALP00000049981"/>
<dbReference type="PaxDb" id="9031-ENSGALP00000022199"/>
<dbReference type="GeneID" id="373942"/>
<dbReference type="KEGG" id="gga:373942"/>
<dbReference type="CTD" id="79814"/>
<dbReference type="VEuPathDB" id="HostDB:geneid_373942"/>
<dbReference type="eggNOG" id="KOG2964">
    <property type="taxonomic scope" value="Eukaryota"/>
</dbReference>
<dbReference type="HOGENOM" id="CLU_039478_0_0_1"/>
<dbReference type="InParanoid" id="Q90XD2"/>
<dbReference type="OrthoDB" id="9992747at2759"/>
<dbReference type="PhylomeDB" id="Q90XD2"/>
<dbReference type="TreeFam" id="TF328612"/>
<dbReference type="UniPathway" id="UPA00534">
    <property type="reaction ID" value="UER00287"/>
</dbReference>
<dbReference type="PRO" id="PR:Q90XD2"/>
<dbReference type="Proteomes" id="UP000000539">
    <property type="component" value="Unassembled WGS sequence"/>
</dbReference>
<dbReference type="GO" id="GO:0005739">
    <property type="term" value="C:mitochondrion"/>
    <property type="evidence" value="ECO:0007669"/>
    <property type="project" value="UniProtKB-SubCell"/>
</dbReference>
<dbReference type="GO" id="GO:0008783">
    <property type="term" value="F:agmatinase activity"/>
    <property type="evidence" value="ECO:0000318"/>
    <property type="project" value="GO_Central"/>
</dbReference>
<dbReference type="GO" id="GO:0046872">
    <property type="term" value="F:metal ion binding"/>
    <property type="evidence" value="ECO:0007669"/>
    <property type="project" value="UniProtKB-KW"/>
</dbReference>
<dbReference type="GO" id="GO:0033389">
    <property type="term" value="P:putrescine biosynthetic process from arginine, via agmatine"/>
    <property type="evidence" value="ECO:0000318"/>
    <property type="project" value="GO_Central"/>
</dbReference>
<dbReference type="GO" id="GO:0008295">
    <property type="term" value="P:spermidine biosynthetic process"/>
    <property type="evidence" value="ECO:0007669"/>
    <property type="project" value="UniProtKB-KW"/>
</dbReference>
<dbReference type="CDD" id="cd11592">
    <property type="entry name" value="Agmatinase_PAH"/>
    <property type="match status" value="1"/>
</dbReference>
<dbReference type="FunFam" id="3.40.800.10:FF:000002">
    <property type="entry name" value="Agmatinase"/>
    <property type="match status" value="1"/>
</dbReference>
<dbReference type="Gene3D" id="3.40.800.10">
    <property type="entry name" value="Ureohydrolase domain"/>
    <property type="match status" value="1"/>
</dbReference>
<dbReference type="InterPro" id="IPR005925">
    <property type="entry name" value="Agmatinase-rel"/>
</dbReference>
<dbReference type="InterPro" id="IPR006035">
    <property type="entry name" value="Ureohydrolase"/>
</dbReference>
<dbReference type="InterPro" id="IPR023696">
    <property type="entry name" value="Ureohydrolase_dom_sf"/>
</dbReference>
<dbReference type="InterPro" id="IPR020855">
    <property type="entry name" value="Ureohydrolase_Mn_BS"/>
</dbReference>
<dbReference type="NCBIfam" id="TIGR01230">
    <property type="entry name" value="agmatinase"/>
    <property type="match status" value="1"/>
</dbReference>
<dbReference type="PANTHER" id="PTHR11358">
    <property type="entry name" value="ARGINASE/AGMATINASE"/>
    <property type="match status" value="1"/>
</dbReference>
<dbReference type="PANTHER" id="PTHR11358:SF26">
    <property type="entry name" value="GUANIDINO ACID HYDROLASE, MITOCHONDRIAL"/>
    <property type="match status" value="1"/>
</dbReference>
<dbReference type="Pfam" id="PF00491">
    <property type="entry name" value="Arginase"/>
    <property type="match status" value="1"/>
</dbReference>
<dbReference type="PIRSF" id="PIRSF036979">
    <property type="entry name" value="Arginase"/>
    <property type="match status" value="1"/>
</dbReference>
<dbReference type="PRINTS" id="PR00116">
    <property type="entry name" value="ARGINASE"/>
</dbReference>
<dbReference type="SUPFAM" id="SSF52768">
    <property type="entry name" value="Arginase/deacetylase"/>
    <property type="match status" value="1"/>
</dbReference>
<dbReference type="PROSITE" id="PS01053">
    <property type="entry name" value="ARGINASE_1"/>
    <property type="match status" value="1"/>
</dbReference>
<dbReference type="PROSITE" id="PS51409">
    <property type="entry name" value="ARGINASE_2"/>
    <property type="match status" value="1"/>
</dbReference>
<proteinExistence type="evidence at transcript level"/>
<protein>
    <recommendedName>
        <fullName>Agmatinase, mitochondrial</fullName>
        <ecNumber evidence="2">3.5.3.11</ecNumber>
    </recommendedName>
    <alternativeName>
        <fullName>Agmatine ureohydrolase</fullName>
        <shortName>AUH</shortName>
    </alternativeName>
</protein>
<reference key="1">
    <citation type="submission" date="2001-07" db="EMBL/GenBank/DDBJ databases">
        <title>Identification of chicken agmatinase.</title>
        <authorList>
            <person name="Morris S.M. Jr."/>
            <person name="Kepka-Lenhart D."/>
        </authorList>
    </citation>
    <scope>NUCLEOTIDE SEQUENCE [MRNA]</scope>
    <source>
        <tissue>Liver</tissue>
    </source>
</reference>
<accession>Q90XD2</accession>